<feature type="transit peptide" description="Mitochondrion" evidence="1">
    <location>
        <begin position="1"/>
        <end position="35"/>
    </location>
</feature>
<feature type="chain" id="PRO_0000234301" description="NADH dehydrogenase [ubiquinone] 1 alpha subcomplex subunit 9, mitochondrial">
    <location>
        <begin position="36"/>
        <end position="377"/>
    </location>
</feature>
<feature type="modified residue" description="N6-succinyllysine" evidence="4">
    <location>
        <position position="175"/>
    </location>
</feature>
<feature type="modified residue" description="N6-acetyllysine" evidence="4">
    <location>
        <position position="189"/>
    </location>
</feature>
<feature type="modified residue" description="N6-acetyllysine" evidence="4">
    <location>
        <position position="370"/>
    </location>
</feature>
<accession>P0CB81</accession>
<accession>Q0MQB2</accession>
<accession>Q5R5S0</accession>
<comment type="function">
    <text evidence="2">Accessory subunit of the mitochondrial membrane respiratory chain NADH dehydrogenase (Complex I), that is believed not to be involved in catalysis. Complex I functions in the transfer of electrons from NADH to the respiratory chain. The immediate electron acceptor for the enzyme is believed to be ubiquinone.</text>
</comment>
<comment type="cofactor">
    <cofactor evidence="1">
        <name>FAD</name>
        <dbReference type="ChEBI" id="CHEBI:57692"/>
    </cofactor>
    <text evidence="1">Binds 1 FAD per subunit.</text>
</comment>
<comment type="subunit">
    <text evidence="2 3">Complex I is composed of 45 different subunits (By similarity). This a component of the hydrophobic protein fraction (By similarity). Interacts with BLOC1S1 (By similarity). Interacts with SLC2A4 (By similarity). Interacts with CLOCK (By similarity). Interacts with RAB5IF (By similarity).</text>
</comment>
<comment type="subcellular location">
    <subcellularLocation>
        <location evidence="2">Mitochondrion matrix</location>
    </subcellularLocation>
</comment>
<comment type="PTM">
    <text evidence="2">Acetylated on lysine residues. BLOC1S1 is required for acetylation. Acetylated by CLOCK in a circadian manner.</text>
</comment>
<comment type="similarity">
    <text evidence="5">Belongs to the complex I NDUFA9 subunit family.</text>
</comment>
<keyword id="KW-0007">Acetylation</keyword>
<keyword id="KW-0249">Electron transport</keyword>
<keyword id="KW-0274">FAD</keyword>
<keyword id="KW-0285">Flavoprotein</keyword>
<keyword id="KW-0496">Mitochondrion</keyword>
<keyword id="KW-1185">Reference proteome</keyword>
<keyword id="KW-0679">Respiratory chain</keyword>
<keyword id="KW-0809">Transit peptide</keyword>
<keyword id="KW-0813">Transport</keyword>
<name>NDUA9_PONAB</name>
<reference key="1">
    <citation type="submission" date="2004-11" db="EMBL/GenBank/DDBJ databases">
        <authorList>
            <consortium name="The German cDNA consortium"/>
        </authorList>
    </citation>
    <scope>NUCLEOTIDE SEQUENCE [LARGE SCALE MRNA]</scope>
    <source>
        <tissue>Brain cortex</tissue>
    </source>
</reference>
<dbReference type="EMBL" id="CR860786">
    <property type="protein sequence ID" value="CAH92896.1"/>
    <property type="molecule type" value="mRNA"/>
</dbReference>
<dbReference type="RefSeq" id="NP_001127602.1">
    <property type="nucleotide sequence ID" value="NM_001134130.1"/>
</dbReference>
<dbReference type="SMR" id="P0CB81"/>
<dbReference type="FunCoup" id="P0CB81">
    <property type="interactions" value="2514"/>
</dbReference>
<dbReference type="STRING" id="9601.ENSPPYP00000004753"/>
<dbReference type="Ensembl" id="ENSPPYT00000004941.3">
    <property type="protein sequence ID" value="ENSPPYP00000004753.3"/>
    <property type="gene ID" value="ENSPPYG00000004171.3"/>
</dbReference>
<dbReference type="GeneID" id="100174681"/>
<dbReference type="KEGG" id="pon:100174681"/>
<dbReference type="CTD" id="4704"/>
<dbReference type="eggNOG" id="KOG2865">
    <property type="taxonomic scope" value="Eukaryota"/>
</dbReference>
<dbReference type="GeneTree" id="ENSGT00390000006865"/>
<dbReference type="InParanoid" id="P0CB81"/>
<dbReference type="OMA" id="PEDQFTN"/>
<dbReference type="OrthoDB" id="275457at2759"/>
<dbReference type="Proteomes" id="UP000001595">
    <property type="component" value="Chromosome 12"/>
</dbReference>
<dbReference type="GO" id="GO:0005743">
    <property type="term" value="C:mitochondrial inner membrane"/>
    <property type="evidence" value="ECO:0007669"/>
    <property type="project" value="Ensembl"/>
</dbReference>
<dbReference type="GO" id="GO:0005759">
    <property type="term" value="C:mitochondrial matrix"/>
    <property type="evidence" value="ECO:0007669"/>
    <property type="project" value="UniProtKB-SubCell"/>
</dbReference>
<dbReference type="GO" id="GO:0045271">
    <property type="term" value="C:respiratory chain complex I"/>
    <property type="evidence" value="ECO:0000250"/>
    <property type="project" value="UniProtKB"/>
</dbReference>
<dbReference type="GO" id="GO:0003954">
    <property type="term" value="F:NADH dehydrogenase activity"/>
    <property type="evidence" value="ECO:0007669"/>
    <property type="project" value="Ensembl"/>
</dbReference>
<dbReference type="GO" id="GO:0044877">
    <property type="term" value="F:protein-containing complex binding"/>
    <property type="evidence" value="ECO:0007669"/>
    <property type="project" value="Ensembl"/>
</dbReference>
<dbReference type="GO" id="GO:0007623">
    <property type="term" value="P:circadian rhythm"/>
    <property type="evidence" value="ECO:0000250"/>
    <property type="project" value="UniProtKB"/>
</dbReference>
<dbReference type="CDD" id="cd05271">
    <property type="entry name" value="NDUFA9_like_SDR_a"/>
    <property type="match status" value="1"/>
</dbReference>
<dbReference type="FunFam" id="3.40.50.720:FF:000246">
    <property type="entry name" value="NADH dehydrogenase [ubiquinone] 1 alpha subcomplex subunit 9, mitochondrial"/>
    <property type="match status" value="1"/>
</dbReference>
<dbReference type="Gene3D" id="3.40.50.720">
    <property type="entry name" value="NAD(P)-binding Rossmann-like Domain"/>
    <property type="match status" value="1"/>
</dbReference>
<dbReference type="InterPro" id="IPR051207">
    <property type="entry name" value="ComplexI_NDUFA9_subunit"/>
</dbReference>
<dbReference type="InterPro" id="IPR001509">
    <property type="entry name" value="Epimerase_deHydtase"/>
</dbReference>
<dbReference type="InterPro" id="IPR036291">
    <property type="entry name" value="NAD(P)-bd_dom_sf"/>
</dbReference>
<dbReference type="PANTHER" id="PTHR12126:SF10">
    <property type="entry name" value="NADH DEHYDROGENASE [UBIQUINONE] 1 ALPHA SUBCOMPLEX SUBUNIT 9, MITOCHONDRIAL"/>
    <property type="match status" value="1"/>
</dbReference>
<dbReference type="PANTHER" id="PTHR12126">
    <property type="entry name" value="NADH-UBIQUINONE OXIDOREDUCTASE 39 KDA SUBUNIT-RELATED"/>
    <property type="match status" value="1"/>
</dbReference>
<dbReference type="Pfam" id="PF01370">
    <property type="entry name" value="Epimerase"/>
    <property type="match status" value="1"/>
</dbReference>
<dbReference type="SUPFAM" id="SSF51735">
    <property type="entry name" value="NAD(P)-binding Rossmann-fold domains"/>
    <property type="match status" value="1"/>
</dbReference>
<protein>
    <recommendedName>
        <fullName>NADH dehydrogenase [ubiquinone] 1 alpha subcomplex subunit 9, mitochondrial</fullName>
    </recommendedName>
    <alternativeName>
        <fullName>Complex I-39kD</fullName>
        <shortName>CI-39kD</shortName>
    </alternativeName>
    <alternativeName>
        <fullName>NADH-ubiquinone oxidoreductase 39 kDa subunit</fullName>
    </alternativeName>
</protein>
<evidence type="ECO:0000250" key="1"/>
<evidence type="ECO:0000250" key="2">
    <source>
        <dbReference type="UniProtKB" id="Q16795"/>
    </source>
</evidence>
<evidence type="ECO:0000250" key="3">
    <source>
        <dbReference type="UniProtKB" id="Q5BK63"/>
    </source>
</evidence>
<evidence type="ECO:0000250" key="4">
    <source>
        <dbReference type="UniProtKB" id="Q9DC69"/>
    </source>
</evidence>
<evidence type="ECO:0000305" key="5"/>
<proteinExistence type="evidence at transcript level"/>
<sequence>MAAAAQSRVVRVLSMSRSAITAIATSVCHGPPRRQLHHALIPHGKGGRSSVSGIVATVFGATGFLGRYVVNHLGRMGSQVIIPYRCDTYDIMHLRPMGDLGQLLFLEWDARDKDSIRRVVQHSNVVINLIGRDWETRNFDFEDVFVKIPQAIAQLSKEAGVEKFIHVSHLNANIKSSSRYLRNKAVGEKVVRDAFPEAIIIKPSDIFGREDRFLNSFASMHRFGPTPLGSLGWKTVKQPVYVVDVSKGIVNAVKDPDANGKSFAFVGPNRYLLFHLVKYIFAVAHRLFLPFPLPLFAYRWVARVFEISPFEPWITRDKVERMHITDMKLPHLPGLEDLGIQATPLELKAIEVLRRHRTYRWLSAEIEDVKPAKTVNI</sequence>
<organism>
    <name type="scientific">Pongo abelii</name>
    <name type="common">Sumatran orangutan</name>
    <name type="synonym">Pongo pygmaeus abelii</name>
    <dbReference type="NCBI Taxonomy" id="9601"/>
    <lineage>
        <taxon>Eukaryota</taxon>
        <taxon>Metazoa</taxon>
        <taxon>Chordata</taxon>
        <taxon>Craniata</taxon>
        <taxon>Vertebrata</taxon>
        <taxon>Euteleostomi</taxon>
        <taxon>Mammalia</taxon>
        <taxon>Eutheria</taxon>
        <taxon>Euarchontoglires</taxon>
        <taxon>Primates</taxon>
        <taxon>Haplorrhini</taxon>
        <taxon>Catarrhini</taxon>
        <taxon>Hominidae</taxon>
        <taxon>Pongo</taxon>
    </lineage>
</organism>
<gene>
    <name type="primary">NDUFA9</name>
</gene>